<comment type="function">
    <text evidence="1">Regulation of fluid secretion. May stimulate primary urine secretion by Malpighian tubules and causes a dose-dependent stimulation of cAMP levels in the tubules.</text>
</comment>
<comment type="subcellular location">
    <subcellularLocation>
        <location>Secreted</location>
    </subcellularLocation>
</comment>
<comment type="mass spectrometry" mass="4722.0" method="MALDI" evidence="1"/>
<comment type="similarity">
    <text evidence="2">Belongs to the sauvagine/corticotropin-releasing factor/urotensin I family.</text>
</comment>
<accession>P82014</accession>
<dbReference type="SMR" id="P82014"/>
<dbReference type="GO" id="GO:0005576">
    <property type="term" value="C:extracellular region"/>
    <property type="evidence" value="ECO:0007669"/>
    <property type="project" value="UniProtKB-SubCell"/>
</dbReference>
<dbReference type="GO" id="GO:0005179">
    <property type="term" value="F:hormone activity"/>
    <property type="evidence" value="ECO:0007669"/>
    <property type="project" value="UniProtKB-KW"/>
</dbReference>
<dbReference type="Gene3D" id="6.10.250.1920">
    <property type="match status" value="1"/>
</dbReference>
<dbReference type="InterPro" id="IPR018446">
    <property type="entry name" value="Corticotropin-releasing_fac_CS"/>
</dbReference>
<dbReference type="InterPro" id="IPR000187">
    <property type="entry name" value="CRF"/>
</dbReference>
<dbReference type="Pfam" id="PF00473">
    <property type="entry name" value="CRF"/>
    <property type="match status" value="1"/>
</dbReference>
<dbReference type="SMART" id="SM00039">
    <property type="entry name" value="CRF"/>
    <property type="match status" value="1"/>
</dbReference>
<dbReference type="PROSITE" id="PS00511">
    <property type="entry name" value="CRF"/>
    <property type="match status" value="1"/>
</dbReference>
<reference key="1">
    <citation type="journal article" date="2000" name="Insect Biochem. Mol. Biol.">
        <title>Isolation and characterization of CRF-related diuretic hormones from the whitelined sphinx moth Hyles lineata.</title>
        <authorList>
            <person name="Furuya K."/>
            <person name="Harper M.A."/>
            <person name="Schegg K.M."/>
            <person name="Shooley D.A."/>
        </authorList>
    </citation>
    <scope>PROTEIN SEQUENCE</scope>
    <scope>FUNCTION</scope>
    <scope>AMIDATION AT ILE-41</scope>
    <scope>MASS SPECTROMETRY</scope>
    <source>
        <tissue>Head</tissue>
    </source>
</reference>
<protein>
    <recommendedName>
        <fullName>Diuretic hormone 1</fullName>
        <shortName>DH-1</shortName>
    </recommendedName>
    <alternativeName>
        <fullName>DH(41)</fullName>
    </alternativeName>
    <alternativeName>
        <fullName>Diuretic peptide 1</fullName>
        <shortName>DP-1</shortName>
    </alternativeName>
</protein>
<name>DIUH1_HYLLI</name>
<proteinExistence type="evidence at protein level"/>
<keyword id="KW-0027">Amidation</keyword>
<keyword id="KW-0903">Direct protein sequencing</keyword>
<keyword id="KW-0372">Hormone</keyword>
<keyword id="KW-0964">Secreted</keyword>
<feature type="chain" id="PRO_0000221018" description="Diuretic hormone 1" evidence="1">
    <location>
        <begin position="1"/>
        <end position="41"/>
    </location>
</feature>
<feature type="modified residue" description="Isoleucine amide" evidence="1">
    <location>
        <position position="41"/>
    </location>
</feature>
<organism>
    <name type="scientific">Hyles lineata</name>
    <name type="common">White-lined sphinx moth</name>
    <dbReference type="NCBI Taxonomy" id="103890"/>
    <lineage>
        <taxon>Eukaryota</taxon>
        <taxon>Metazoa</taxon>
        <taxon>Ecdysozoa</taxon>
        <taxon>Arthropoda</taxon>
        <taxon>Hexapoda</taxon>
        <taxon>Insecta</taxon>
        <taxon>Pterygota</taxon>
        <taxon>Neoptera</taxon>
        <taxon>Endopterygota</taxon>
        <taxon>Lepidoptera</taxon>
        <taxon>Glossata</taxon>
        <taxon>Ditrysia</taxon>
        <taxon>Bombycoidea</taxon>
        <taxon>Sphingidae</taxon>
        <taxon>Macroglossinae</taxon>
        <taxon>Macroglossini</taxon>
        <taxon>Hyles</taxon>
    </lineage>
</organism>
<sequence length="41" mass="4724">RMPSLSIDLPMSVLRQKLSLEKERKVQALRAAANRNFLNDI</sequence>
<evidence type="ECO:0000269" key="1">
    <source>
    </source>
</evidence>
<evidence type="ECO:0000305" key="2"/>